<sequence>MNIMRTAMLLAFMTALFMGVGFLIGGKGGMMIALVIAGAMNLFSYWNSDRMVLSAYHAQEVDPRNAPEFYEIVRGLTQNAGLPMPKVYIFDNPQPNAFATGRNPQNAAVAASTGLLQALTPEEVAGVMAHELAHVEHRDTLTMTITATLAGAISMLGNFAFFFGGRRDENGNGGGIIGPLVAMIVAPFAAMLVQMAISRTREYAADRRGAEICGNPLWLASALAKIAGAHQPNYQAERNPATAHMFIINPLSGQKMDSLFSTHPDTSNRIAALQALAQEMGGRQANVYRPQHSKPAASGPWGSSAERSTDDPWGVKGGASTRSVPKIGRRGKDNDAPKGPWN</sequence>
<organism>
    <name type="scientific">Allorhizobium ampelinum (strain ATCC BAA-846 / DSM 112012 / S4)</name>
    <name type="common">Agrobacterium vitis (strain S4)</name>
    <dbReference type="NCBI Taxonomy" id="311402"/>
    <lineage>
        <taxon>Bacteria</taxon>
        <taxon>Pseudomonadati</taxon>
        <taxon>Pseudomonadota</taxon>
        <taxon>Alphaproteobacteria</taxon>
        <taxon>Hyphomicrobiales</taxon>
        <taxon>Rhizobiaceae</taxon>
        <taxon>Rhizobium/Agrobacterium group</taxon>
        <taxon>Allorhizobium</taxon>
        <taxon>Allorhizobium ampelinum</taxon>
    </lineage>
</organism>
<feature type="chain" id="PRO_1000124219" description="Protease HtpX homolog">
    <location>
        <begin position="1"/>
        <end position="342"/>
    </location>
</feature>
<feature type="transmembrane region" description="Helical" evidence="1">
    <location>
        <begin position="6"/>
        <end position="26"/>
    </location>
</feature>
<feature type="transmembrane region" description="Helical" evidence="1">
    <location>
        <begin position="28"/>
        <end position="48"/>
    </location>
</feature>
<feature type="transmembrane region" description="Helical" evidence="1">
    <location>
        <begin position="145"/>
        <end position="165"/>
    </location>
</feature>
<feature type="transmembrane region" description="Helical" evidence="1">
    <location>
        <begin position="173"/>
        <end position="193"/>
    </location>
</feature>
<feature type="region of interest" description="Disordered" evidence="2">
    <location>
        <begin position="290"/>
        <end position="342"/>
    </location>
</feature>
<feature type="active site" evidence="1">
    <location>
        <position position="131"/>
    </location>
</feature>
<feature type="binding site" evidence="1">
    <location>
        <position position="130"/>
    </location>
    <ligand>
        <name>Zn(2+)</name>
        <dbReference type="ChEBI" id="CHEBI:29105"/>
        <note>catalytic</note>
    </ligand>
</feature>
<feature type="binding site" evidence="1">
    <location>
        <position position="134"/>
    </location>
    <ligand>
        <name>Zn(2+)</name>
        <dbReference type="ChEBI" id="CHEBI:29105"/>
        <note>catalytic</note>
    </ligand>
</feature>
<feature type="binding site" evidence="1">
    <location>
        <position position="202"/>
    </location>
    <ligand>
        <name>Zn(2+)</name>
        <dbReference type="ChEBI" id="CHEBI:29105"/>
        <note>catalytic</note>
    </ligand>
</feature>
<comment type="cofactor">
    <cofactor evidence="1">
        <name>Zn(2+)</name>
        <dbReference type="ChEBI" id="CHEBI:29105"/>
    </cofactor>
    <text evidence="1">Binds 1 zinc ion per subunit.</text>
</comment>
<comment type="subcellular location">
    <subcellularLocation>
        <location evidence="1">Cell inner membrane</location>
        <topology evidence="1">Multi-pass membrane protein</topology>
    </subcellularLocation>
</comment>
<comment type="similarity">
    <text evidence="1">Belongs to the peptidase M48B family.</text>
</comment>
<proteinExistence type="inferred from homology"/>
<accession>B9JUJ0</accession>
<keyword id="KW-0997">Cell inner membrane</keyword>
<keyword id="KW-1003">Cell membrane</keyword>
<keyword id="KW-0378">Hydrolase</keyword>
<keyword id="KW-0472">Membrane</keyword>
<keyword id="KW-0479">Metal-binding</keyword>
<keyword id="KW-0482">Metalloprotease</keyword>
<keyword id="KW-0645">Protease</keyword>
<keyword id="KW-1185">Reference proteome</keyword>
<keyword id="KW-0812">Transmembrane</keyword>
<keyword id="KW-1133">Transmembrane helix</keyword>
<keyword id="KW-0862">Zinc</keyword>
<reference key="1">
    <citation type="journal article" date="2009" name="J. Bacteriol.">
        <title>Genome sequences of three Agrobacterium biovars help elucidate the evolution of multichromosome genomes in bacteria.</title>
        <authorList>
            <person name="Slater S.C."/>
            <person name="Goldman B.S."/>
            <person name="Goodner B."/>
            <person name="Setubal J.C."/>
            <person name="Farrand S.K."/>
            <person name="Nester E.W."/>
            <person name="Burr T.J."/>
            <person name="Banta L."/>
            <person name="Dickerman A.W."/>
            <person name="Paulsen I."/>
            <person name="Otten L."/>
            <person name="Suen G."/>
            <person name="Welch R."/>
            <person name="Almeida N.F."/>
            <person name="Arnold F."/>
            <person name="Burton O.T."/>
            <person name="Du Z."/>
            <person name="Ewing A."/>
            <person name="Godsy E."/>
            <person name="Heisel S."/>
            <person name="Houmiel K.L."/>
            <person name="Jhaveri J."/>
            <person name="Lu J."/>
            <person name="Miller N.M."/>
            <person name="Norton S."/>
            <person name="Chen Q."/>
            <person name="Phoolcharoen W."/>
            <person name="Ohlin V."/>
            <person name="Ondrusek D."/>
            <person name="Pride N."/>
            <person name="Stricklin S.L."/>
            <person name="Sun J."/>
            <person name="Wheeler C."/>
            <person name="Wilson L."/>
            <person name="Zhu H."/>
            <person name="Wood D.W."/>
        </authorList>
    </citation>
    <scope>NUCLEOTIDE SEQUENCE [LARGE SCALE GENOMIC DNA]</scope>
    <source>
        <strain>ATCC BAA-846 / DSM 112012 / S4</strain>
    </source>
</reference>
<evidence type="ECO:0000255" key="1">
    <source>
        <dbReference type="HAMAP-Rule" id="MF_00188"/>
    </source>
</evidence>
<evidence type="ECO:0000256" key="2">
    <source>
        <dbReference type="SAM" id="MobiDB-lite"/>
    </source>
</evidence>
<name>HTPX_ALLAM</name>
<dbReference type="EC" id="3.4.24.-" evidence="1"/>
<dbReference type="EMBL" id="CP000633">
    <property type="protein sequence ID" value="ACM38113.1"/>
    <property type="molecule type" value="Genomic_DNA"/>
</dbReference>
<dbReference type="RefSeq" id="WP_015917524.1">
    <property type="nucleotide sequence ID" value="NC_011989.1"/>
</dbReference>
<dbReference type="STRING" id="311402.Avi_4296"/>
<dbReference type="KEGG" id="avi:Avi_4296"/>
<dbReference type="eggNOG" id="COG0501">
    <property type="taxonomic scope" value="Bacteria"/>
</dbReference>
<dbReference type="HOGENOM" id="CLU_042266_3_0_5"/>
<dbReference type="Proteomes" id="UP000001596">
    <property type="component" value="Chromosome 1"/>
</dbReference>
<dbReference type="GO" id="GO:0005886">
    <property type="term" value="C:plasma membrane"/>
    <property type="evidence" value="ECO:0007669"/>
    <property type="project" value="UniProtKB-SubCell"/>
</dbReference>
<dbReference type="GO" id="GO:0004222">
    <property type="term" value="F:metalloendopeptidase activity"/>
    <property type="evidence" value="ECO:0007669"/>
    <property type="project" value="UniProtKB-UniRule"/>
</dbReference>
<dbReference type="GO" id="GO:0008270">
    <property type="term" value="F:zinc ion binding"/>
    <property type="evidence" value="ECO:0007669"/>
    <property type="project" value="UniProtKB-UniRule"/>
</dbReference>
<dbReference type="GO" id="GO:0006508">
    <property type="term" value="P:proteolysis"/>
    <property type="evidence" value="ECO:0007669"/>
    <property type="project" value="UniProtKB-KW"/>
</dbReference>
<dbReference type="CDD" id="cd07336">
    <property type="entry name" value="M48B_HtpX_like"/>
    <property type="match status" value="1"/>
</dbReference>
<dbReference type="Gene3D" id="3.30.2010.10">
    <property type="entry name" value="Metalloproteases ('zincins'), catalytic domain"/>
    <property type="match status" value="1"/>
</dbReference>
<dbReference type="HAMAP" id="MF_00188">
    <property type="entry name" value="Pept_M48_protease_HtpX"/>
    <property type="match status" value="1"/>
</dbReference>
<dbReference type="InterPro" id="IPR050083">
    <property type="entry name" value="HtpX_protease"/>
</dbReference>
<dbReference type="InterPro" id="IPR022919">
    <property type="entry name" value="Pept_M48_protease_HtpX"/>
</dbReference>
<dbReference type="InterPro" id="IPR001915">
    <property type="entry name" value="Peptidase_M48"/>
</dbReference>
<dbReference type="NCBIfam" id="NF002363">
    <property type="entry name" value="PRK01345.1"/>
    <property type="match status" value="1"/>
</dbReference>
<dbReference type="NCBIfam" id="NF002826">
    <property type="entry name" value="PRK03001.1"/>
    <property type="match status" value="1"/>
</dbReference>
<dbReference type="PANTHER" id="PTHR43221">
    <property type="entry name" value="PROTEASE HTPX"/>
    <property type="match status" value="1"/>
</dbReference>
<dbReference type="PANTHER" id="PTHR43221:SF1">
    <property type="entry name" value="PROTEASE HTPX"/>
    <property type="match status" value="1"/>
</dbReference>
<dbReference type="Pfam" id="PF01435">
    <property type="entry name" value="Peptidase_M48"/>
    <property type="match status" value="1"/>
</dbReference>
<gene>
    <name evidence="1" type="primary">htpX</name>
    <name type="ordered locus">Avi_4296</name>
</gene>
<protein>
    <recommendedName>
        <fullName evidence="1">Protease HtpX homolog</fullName>
        <ecNumber evidence="1">3.4.24.-</ecNumber>
    </recommendedName>
</protein>